<organism>
    <name type="scientific">Campylobacter jejuni subsp. jejuni serotype O:2 (strain ATCC 700819 / NCTC 11168)</name>
    <dbReference type="NCBI Taxonomy" id="192222"/>
    <lineage>
        <taxon>Bacteria</taxon>
        <taxon>Pseudomonadati</taxon>
        <taxon>Campylobacterota</taxon>
        <taxon>Epsilonproteobacteria</taxon>
        <taxon>Campylobacterales</taxon>
        <taxon>Campylobacteraceae</taxon>
        <taxon>Campylobacter</taxon>
    </lineage>
</organism>
<gene>
    <name evidence="1" type="primary">nuoB</name>
    <name type="ordered locus">Cj1578c</name>
</gene>
<reference key="1">
    <citation type="journal article" date="2000" name="Nature">
        <title>The genome sequence of the food-borne pathogen Campylobacter jejuni reveals hypervariable sequences.</title>
        <authorList>
            <person name="Parkhill J."/>
            <person name="Wren B.W."/>
            <person name="Mungall K.L."/>
            <person name="Ketley J.M."/>
            <person name="Churcher C.M."/>
            <person name="Basham D."/>
            <person name="Chillingworth T."/>
            <person name="Davies R.M."/>
            <person name="Feltwell T."/>
            <person name="Holroyd S."/>
            <person name="Jagels K."/>
            <person name="Karlyshev A.V."/>
            <person name="Moule S."/>
            <person name="Pallen M.J."/>
            <person name="Penn C.W."/>
            <person name="Quail M.A."/>
            <person name="Rajandream M.A."/>
            <person name="Rutherford K.M."/>
            <person name="van Vliet A.H.M."/>
            <person name="Whitehead S."/>
            <person name="Barrell B.G."/>
        </authorList>
    </citation>
    <scope>NUCLEOTIDE SEQUENCE [LARGE SCALE GENOMIC DNA]</scope>
    <source>
        <strain>ATCC 700819 / NCTC 11168</strain>
    </source>
</reference>
<accession>Q0P850</accession>
<name>NUOB_CAMJE</name>
<comment type="function">
    <text evidence="1">NDH-1 shuttles electrons from NADH, via FMN and iron-sulfur (Fe-S) centers, to quinones in the respiratory chain. The immediate electron acceptor for the enzyme in this species is believed to be ubiquinone. Couples the redox reaction to proton translocation (for every two electrons transferred, four hydrogen ions are translocated across the cytoplasmic membrane), and thus conserves the redox energy in a proton gradient.</text>
</comment>
<comment type="catalytic activity">
    <reaction evidence="1">
        <text>a quinone + NADH + 5 H(+)(in) = a quinol + NAD(+) + 4 H(+)(out)</text>
        <dbReference type="Rhea" id="RHEA:57888"/>
        <dbReference type="ChEBI" id="CHEBI:15378"/>
        <dbReference type="ChEBI" id="CHEBI:24646"/>
        <dbReference type="ChEBI" id="CHEBI:57540"/>
        <dbReference type="ChEBI" id="CHEBI:57945"/>
        <dbReference type="ChEBI" id="CHEBI:132124"/>
    </reaction>
</comment>
<comment type="cofactor">
    <cofactor evidence="1">
        <name>[4Fe-4S] cluster</name>
        <dbReference type="ChEBI" id="CHEBI:49883"/>
    </cofactor>
    <text evidence="1">Binds 1 [4Fe-4S] cluster.</text>
</comment>
<comment type="subunit">
    <text evidence="1">NDH-1 is composed of 14 different subunits. Subunits NuoB, C, D, E, F, and G constitute the peripheral sector of the complex.</text>
</comment>
<comment type="subcellular location">
    <subcellularLocation>
        <location evidence="1">Cell inner membrane</location>
        <topology evidence="1">Peripheral membrane protein</topology>
        <orientation evidence="1">Cytoplasmic side</orientation>
    </subcellularLocation>
</comment>
<comment type="similarity">
    <text evidence="1">Belongs to the complex I 20 kDa subunit family.</text>
</comment>
<dbReference type="EC" id="7.1.1.-" evidence="1"/>
<dbReference type="EMBL" id="AL111168">
    <property type="protein sequence ID" value="CAL35675.1"/>
    <property type="molecule type" value="Genomic_DNA"/>
</dbReference>
<dbReference type="PIR" id="H81252">
    <property type="entry name" value="H81252"/>
</dbReference>
<dbReference type="RefSeq" id="WP_002851253.1">
    <property type="nucleotide sequence ID" value="NZ_SZUC01000002.1"/>
</dbReference>
<dbReference type="RefSeq" id="YP_002344947.1">
    <property type="nucleotide sequence ID" value="NC_002163.1"/>
</dbReference>
<dbReference type="SMR" id="Q0P850"/>
<dbReference type="IntAct" id="Q0P850">
    <property type="interactions" value="8"/>
</dbReference>
<dbReference type="STRING" id="192222.Cj1578c"/>
<dbReference type="TCDB" id="3.D.1.7.1">
    <property type="family name" value="the h+ or na+-translocating nadh dehydrogenase (ndh) family"/>
</dbReference>
<dbReference type="PaxDb" id="192222-Cj1578c"/>
<dbReference type="EnsemblBacteria" id="CAL35675">
    <property type="protein sequence ID" value="CAL35675"/>
    <property type="gene ID" value="Cj1578c"/>
</dbReference>
<dbReference type="GeneID" id="905848"/>
<dbReference type="KEGG" id="cje:Cj1578c"/>
<dbReference type="PATRIC" id="fig|192222.6.peg.1554"/>
<dbReference type="eggNOG" id="COG0377">
    <property type="taxonomic scope" value="Bacteria"/>
</dbReference>
<dbReference type="HOGENOM" id="CLU_055737_7_3_7"/>
<dbReference type="OrthoDB" id="9786737at2"/>
<dbReference type="Proteomes" id="UP000000799">
    <property type="component" value="Chromosome"/>
</dbReference>
<dbReference type="GO" id="GO:0005886">
    <property type="term" value="C:plasma membrane"/>
    <property type="evidence" value="ECO:0007669"/>
    <property type="project" value="UniProtKB-SubCell"/>
</dbReference>
<dbReference type="GO" id="GO:0045271">
    <property type="term" value="C:respiratory chain complex I"/>
    <property type="evidence" value="ECO:0007669"/>
    <property type="project" value="TreeGrafter"/>
</dbReference>
<dbReference type="GO" id="GO:0051539">
    <property type="term" value="F:4 iron, 4 sulfur cluster binding"/>
    <property type="evidence" value="ECO:0007669"/>
    <property type="project" value="UniProtKB-KW"/>
</dbReference>
<dbReference type="GO" id="GO:0005506">
    <property type="term" value="F:iron ion binding"/>
    <property type="evidence" value="ECO:0007669"/>
    <property type="project" value="UniProtKB-UniRule"/>
</dbReference>
<dbReference type="GO" id="GO:0008137">
    <property type="term" value="F:NADH dehydrogenase (ubiquinone) activity"/>
    <property type="evidence" value="ECO:0007669"/>
    <property type="project" value="InterPro"/>
</dbReference>
<dbReference type="GO" id="GO:0050136">
    <property type="term" value="F:NADH:ubiquinone reductase (non-electrogenic) activity"/>
    <property type="evidence" value="ECO:0007669"/>
    <property type="project" value="UniProtKB-UniRule"/>
</dbReference>
<dbReference type="GO" id="GO:0048038">
    <property type="term" value="F:quinone binding"/>
    <property type="evidence" value="ECO:0007669"/>
    <property type="project" value="UniProtKB-KW"/>
</dbReference>
<dbReference type="GO" id="GO:0009060">
    <property type="term" value="P:aerobic respiration"/>
    <property type="evidence" value="ECO:0007669"/>
    <property type="project" value="TreeGrafter"/>
</dbReference>
<dbReference type="GO" id="GO:0015990">
    <property type="term" value="P:electron transport coupled proton transport"/>
    <property type="evidence" value="ECO:0007669"/>
    <property type="project" value="TreeGrafter"/>
</dbReference>
<dbReference type="FunFam" id="3.40.50.12280:FF:000002">
    <property type="entry name" value="NADH-quinone oxidoreductase subunit B"/>
    <property type="match status" value="1"/>
</dbReference>
<dbReference type="Gene3D" id="3.40.50.12280">
    <property type="match status" value="1"/>
</dbReference>
<dbReference type="HAMAP" id="MF_01356">
    <property type="entry name" value="NDH1_NuoB"/>
    <property type="match status" value="1"/>
</dbReference>
<dbReference type="InterPro" id="IPR006137">
    <property type="entry name" value="NADH_UbQ_OxRdtase-like_20kDa"/>
</dbReference>
<dbReference type="InterPro" id="IPR006138">
    <property type="entry name" value="NADH_UQ_OxRdtase_20Kd_su"/>
</dbReference>
<dbReference type="NCBIfam" id="TIGR01957">
    <property type="entry name" value="nuoB_fam"/>
    <property type="match status" value="1"/>
</dbReference>
<dbReference type="NCBIfam" id="NF005012">
    <property type="entry name" value="PRK06411.1"/>
    <property type="match status" value="1"/>
</dbReference>
<dbReference type="PANTHER" id="PTHR11995">
    <property type="entry name" value="NADH DEHYDROGENASE"/>
    <property type="match status" value="1"/>
</dbReference>
<dbReference type="PANTHER" id="PTHR11995:SF14">
    <property type="entry name" value="NADH DEHYDROGENASE [UBIQUINONE] IRON-SULFUR PROTEIN 7, MITOCHONDRIAL"/>
    <property type="match status" value="1"/>
</dbReference>
<dbReference type="Pfam" id="PF01058">
    <property type="entry name" value="Oxidored_q6"/>
    <property type="match status" value="1"/>
</dbReference>
<dbReference type="SUPFAM" id="SSF56770">
    <property type="entry name" value="HydA/Nqo6-like"/>
    <property type="match status" value="1"/>
</dbReference>
<protein>
    <recommendedName>
        <fullName evidence="1">NADH-quinone oxidoreductase subunit B</fullName>
        <ecNumber evidence="1">7.1.1.-</ecNumber>
    </recommendedName>
    <alternativeName>
        <fullName evidence="1">NADH dehydrogenase I subunit B</fullName>
    </alternativeName>
    <alternativeName>
        <fullName evidence="1">NDH-1 subunit B</fullName>
    </alternativeName>
</protein>
<proteinExistence type="inferred from homology"/>
<feature type="chain" id="PRO_0000376161" description="NADH-quinone oxidoreductase subunit B">
    <location>
        <begin position="1"/>
        <end position="167"/>
    </location>
</feature>
<feature type="binding site" evidence="1">
    <location>
        <position position="40"/>
    </location>
    <ligand>
        <name>[4Fe-4S] cluster</name>
        <dbReference type="ChEBI" id="CHEBI:49883"/>
    </ligand>
</feature>
<feature type="binding site" evidence="1">
    <location>
        <position position="41"/>
    </location>
    <ligand>
        <name>[4Fe-4S] cluster</name>
        <dbReference type="ChEBI" id="CHEBI:49883"/>
    </ligand>
</feature>
<feature type="binding site" evidence="1">
    <location>
        <position position="105"/>
    </location>
    <ligand>
        <name>[4Fe-4S] cluster</name>
        <dbReference type="ChEBI" id="CHEBI:49883"/>
    </ligand>
</feature>
<feature type="binding site" evidence="1">
    <location>
        <position position="134"/>
    </location>
    <ligand>
        <name>[4Fe-4S] cluster</name>
        <dbReference type="ChEBI" id="CHEBI:49883"/>
    </ligand>
</feature>
<sequence length="167" mass="18682">MAEHQVNYASGLPVVLTSVDKLVQWGRSNSLWALSYGLACCAIEMMAAGGSRYDFDRFGTIFRASPRHSEVMIIAGTLCKKHAEFTRRLYDQMPDPKWVISMGSCANTGGMFNTYSTVQGVDRIIPVDIYVPGCAPRPESFQFALMILQKKIRKEKASRKIAPKRLI</sequence>
<evidence type="ECO:0000255" key="1">
    <source>
        <dbReference type="HAMAP-Rule" id="MF_01356"/>
    </source>
</evidence>
<keyword id="KW-0004">4Fe-4S</keyword>
<keyword id="KW-0997">Cell inner membrane</keyword>
<keyword id="KW-1003">Cell membrane</keyword>
<keyword id="KW-0408">Iron</keyword>
<keyword id="KW-0411">Iron-sulfur</keyword>
<keyword id="KW-0472">Membrane</keyword>
<keyword id="KW-0479">Metal-binding</keyword>
<keyword id="KW-0520">NAD</keyword>
<keyword id="KW-0874">Quinone</keyword>
<keyword id="KW-1185">Reference proteome</keyword>
<keyword id="KW-1278">Translocase</keyword>
<keyword id="KW-0813">Transport</keyword>
<keyword id="KW-0830">Ubiquinone</keyword>